<proteinExistence type="inferred from homology"/>
<gene>
    <name type="primary">luxG</name>
</gene>
<comment type="function">
    <text>Probable flavin reductase in the luminescent systems of different marine bacteria.</text>
</comment>
<comment type="similarity">
    <text evidence="3">Belongs to the Fre/LuxG FAD/NAD(P) flavoprotein oxidoreductase family.</text>
</comment>
<feature type="chain" id="PRO_0000068142" description="Probable flavin reductase">
    <location>
        <begin position="1"/>
        <end position="236"/>
    </location>
</feature>
<feature type="domain" description="FAD-binding FR-type" evidence="2">
    <location>
        <begin position="1"/>
        <end position="102"/>
    </location>
</feature>
<feature type="binding site" evidence="1">
    <location>
        <begin position="114"/>
        <end position="118"/>
    </location>
    <ligand>
        <name>pyridine</name>
        <dbReference type="ChEBI" id="CHEBI:16227"/>
    </ligand>
</feature>
<reference key="1">
    <citation type="journal article" date="1990" name="J. Bacteriol.">
        <title>A new Vibrio fischeri lux gene precedes a bidirectional termination site for the lux operon.</title>
        <authorList>
            <person name="Swartzman E."/>
            <person name="Kapoor S."/>
            <person name="Graham A.F."/>
            <person name="Meighen E.A."/>
        </authorList>
    </citation>
    <scope>NUCLEOTIDE SEQUENCE [GENOMIC DNA]</scope>
</reference>
<organism>
    <name type="scientific">Aliivibrio fischeri</name>
    <name type="common">Vibrio fischeri</name>
    <dbReference type="NCBI Taxonomy" id="668"/>
    <lineage>
        <taxon>Bacteria</taxon>
        <taxon>Pseudomonadati</taxon>
        <taxon>Pseudomonadota</taxon>
        <taxon>Gammaproteobacteria</taxon>
        <taxon>Vibrionales</taxon>
        <taxon>Vibrionaceae</taxon>
        <taxon>Aliivibrio</taxon>
    </lineage>
</organism>
<name>LUXG_ALIFS</name>
<evidence type="ECO:0000250" key="1"/>
<evidence type="ECO:0000255" key="2">
    <source>
        <dbReference type="PROSITE-ProRule" id="PRU00716"/>
    </source>
</evidence>
<evidence type="ECO:0000305" key="3"/>
<sequence length="236" mass="26503">MIVDGRVSKIVLASIKNNIYKVFITVNSPIKFIAGQFVMVTINGKKCPFSIANCPTKNHEIELHIGSSNKDCSLDIIEYFVDALVEEVAIELDAPHGNAWLRSESNNPLLLIAGGTGLSYINSILTNCLNRNIPQDIYLYWGVKNSSLLYEDEELLELSLNNKNLHYIPVIEDKSEEWIGKKGTVLDAVMEDFTDLAHFDIYVCGPFMMAKTAKEKLIEEKKAKSEQMFADAFAYV</sequence>
<protein>
    <recommendedName>
        <fullName>Probable flavin reductase</fullName>
        <ecNumber>1.-.-.-</ecNumber>
    </recommendedName>
</protein>
<dbReference type="EC" id="1.-.-.-"/>
<dbReference type="EMBL" id="M62812">
    <property type="protein sequence ID" value="AAA27536.1"/>
    <property type="molecule type" value="Genomic_DNA"/>
</dbReference>
<dbReference type="PIR" id="A37830">
    <property type="entry name" value="A37830"/>
</dbReference>
<dbReference type="SMR" id="P24273"/>
<dbReference type="GO" id="GO:0016491">
    <property type="term" value="F:oxidoreductase activity"/>
    <property type="evidence" value="ECO:0007669"/>
    <property type="project" value="UniProtKB-KW"/>
</dbReference>
<dbReference type="GO" id="GO:0008218">
    <property type="term" value="P:bioluminescence"/>
    <property type="evidence" value="ECO:0007669"/>
    <property type="project" value="UniProtKB-KW"/>
</dbReference>
<dbReference type="CDD" id="cd06189">
    <property type="entry name" value="flavin_oxioreductase"/>
    <property type="match status" value="1"/>
</dbReference>
<dbReference type="Gene3D" id="3.40.50.80">
    <property type="entry name" value="Nucleotide-binding domain of ferredoxin-NADP reductase (FNR) module"/>
    <property type="match status" value="1"/>
</dbReference>
<dbReference type="Gene3D" id="2.40.30.10">
    <property type="entry name" value="Translation factors"/>
    <property type="match status" value="1"/>
</dbReference>
<dbReference type="InterPro" id="IPR017927">
    <property type="entry name" value="FAD-bd_FR_type"/>
</dbReference>
<dbReference type="InterPro" id="IPR039261">
    <property type="entry name" value="FNR_nucleotide-bd"/>
</dbReference>
<dbReference type="InterPro" id="IPR050415">
    <property type="entry name" value="MRET"/>
</dbReference>
<dbReference type="InterPro" id="IPR001433">
    <property type="entry name" value="OxRdtase_FAD/NAD-bd"/>
</dbReference>
<dbReference type="InterPro" id="IPR017938">
    <property type="entry name" value="Riboflavin_synthase-like_b-brl"/>
</dbReference>
<dbReference type="NCBIfam" id="NF005963">
    <property type="entry name" value="PRK08051.1"/>
    <property type="match status" value="1"/>
</dbReference>
<dbReference type="PANTHER" id="PTHR47354:SF7">
    <property type="entry name" value="NAD(P)H-FLAVIN REDUCTASE"/>
    <property type="match status" value="1"/>
</dbReference>
<dbReference type="PANTHER" id="PTHR47354">
    <property type="entry name" value="NADH OXIDOREDUCTASE HCR"/>
    <property type="match status" value="1"/>
</dbReference>
<dbReference type="Pfam" id="PF00175">
    <property type="entry name" value="NAD_binding_1"/>
    <property type="match status" value="1"/>
</dbReference>
<dbReference type="PRINTS" id="PR00410">
    <property type="entry name" value="PHEHYDRXLASE"/>
</dbReference>
<dbReference type="SUPFAM" id="SSF52343">
    <property type="entry name" value="Ferredoxin reductase-like, C-terminal NADP-linked domain"/>
    <property type="match status" value="1"/>
</dbReference>
<dbReference type="SUPFAM" id="SSF63380">
    <property type="entry name" value="Riboflavin synthase domain-like"/>
    <property type="match status" value="1"/>
</dbReference>
<dbReference type="PROSITE" id="PS51384">
    <property type="entry name" value="FAD_FR"/>
    <property type="match status" value="1"/>
</dbReference>
<keyword id="KW-0274">FAD</keyword>
<keyword id="KW-0285">Flavoprotein</keyword>
<keyword id="KW-0455">Luminescence</keyword>
<keyword id="KW-0560">Oxidoreductase</keyword>
<accession>P24273</accession>